<gene>
    <name type="ordered locus">aq_175.1</name>
</gene>
<sequence length="68" mass="7943">MKSIVLIFLKFWQKFISPLYPSSCRYYPTCSTYAIMAVEKYGVLKGLIKAFFRVLRCNPFFKGGVDYP</sequence>
<evidence type="ECO:0000255" key="1">
    <source>
        <dbReference type="HAMAP-Rule" id="MF_00386"/>
    </source>
</evidence>
<organism>
    <name type="scientific">Aquifex aeolicus (strain VF5)</name>
    <dbReference type="NCBI Taxonomy" id="224324"/>
    <lineage>
        <taxon>Bacteria</taxon>
        <taxon>Pseudomonadati</taxon>
        <taxon>Aquificota</taxon>
        <taxon>Aquificia</taxon>
        <taxon>Aquificales</taxon>
        <taxon>Aquificaceae</taxon>
        <taxon>Aquifex</taxon>
    </lineage>
</organism>
<protein>
    <recommendedName>
        <fullName evidence="1">Putative membrane protein insertion efficiency factor</fullName>
    </recommendedName>
</protein>
<accession>O66562</accession>
<reference key="1">
    <citation type="journal article" date="1998" name="Nature">
        <title>The complete genome of the hyperthermophilic bacterium Aquifex aeolicus.</title>
        <authorList>
            <person name="Deckert G."/>
            <person name="Warren P.V."/>
            <person name="Gaasterland T."/>
            <person name="Young W.G."/>
            <person name="Lenox A.L."/>
            <person name="Graham D.E."/>
            <person name="Overbeek R."/>
            <person name="Snead M.A."/>
            <person name="Keller M."/>
            <person name="Aujay M."/>
            <person name="Huber R."/>
            <person name="Feldman R.A."/>
            <person name="Short J.M."/>
            <person name="Olsen G.J."/>
            <person name="Swanson R.V."/>
        </authorList>
    </citation>
    <scope>NUCLEOTIDE SEQUENCE [LARGE SCALE GENOMIC DNA]</scope>
    <source>
        <strain>VF5</strain>
    </source>
</reference>
<keyword id="KW-0997">Cell inner membrane</keyword>
<keyword id="KW-1003">Cell membrane</keyword>
<keyword id="KW-0472">Membrane</keyword>
<keyword id="KW-1185">Reference proteome</keyword>
<name>YIDD_AQUAE</name>
<proteinExistence type="inferred from homology"/>
<dbReference type="EMBL" id="AE000657">
    <property type="protein sequence ID" value="AAC06538.1"/>
    <property type="molecule type" value="Genomic_DNA"/>
</dbReference>
<dbReference type="RefSeq" id="NP_213122.1">
    <property type="nucleotide sequence ID" value="NC_000918.1"/>
</dbReference>
<dbReference type="RefSeq" id="WP_010880060.1">
    <property type="nucleotide sequence ID" value="NC_000918.1"/>
</dbReference>
<dbReference type="FunCoup" id="O66562">
    <property type="interactions" value="217"/>
</dbReference>
<dbReference type="STRING" id="224324.aq_175a"/>
<dbReference type="EnsemblBacteria" id="AAC06538">
    <property type="protein sequence ID" value="AAC06538"/>
    <property type="gene ID" value="aq_175a"/>
</dbReference>
<dbReference type="KEGG" id="aae:aq_175a"/>
<dbReference type="PATRIC" id="fig|224324.8.peg.152"/>
<dbReference type="eggNOG" id="COG0759">
    <property type="taxonomic scope" value="Bacteria"/>
</dbReference>
<dbReference type="HOGENOM" id="CLU_144811_6_0_0"/>
<dbReference type="InParanoid" id="O66562"/>
<dbReference type="OrthoDB" id="9801753at2"/>
<dbReference type="Proteomes" id="UP000000798">
    <property type="component" value="Chromosome"/>
</dbReference>
<dbReference type="GO" id="GO:0005886">
    <property type="term" value="C:plasma membrane"/>
    <property type="evidence" value="ECO:0007669"/>
    <property type="project" value="UniProtKB-SubCell"/>
</dbReference>
<dbReference type="HAMAP" id="MF_00386">
    <property type="entry name" value="UPF0161_YidD"/>
    <property type="match status" value="1"/>
</dbReference>
<dbReference type="InterPro" id="IPR002696">
    <property type="entry name" value="Membr_insert_effic_factor_YidD"/>
</dbReference>
<dbReference type="NCBIfam" id="TIGR00278">
    <property type="entry name" value="membrane protein insertion efficiency factor YidD"/>
    <property type="match status" value="1"/>
</dbReference>
<dbReference type="PANTHER" id="PTHR33383">
    <property type="entry name" value="MEMBRANE PROTEIN INSERTION EFFICIENCY FACTOR-RELATED"/>
    <property type="match status" value="1"/>
</dbReference>
<dbReference type="PANTHER" id="PTHR33383:SF1">
    <property type="entry name" value="MEMBRANE PROTEIN INSERTION EFFICIENCY FACTOR-RELATED"/>
    <property type="match status" value="1"/>
</dbReference>
<dbReference type="Pfam" id="PF01809">
    <property type="entry name" value="YidD"/>
    <property type="match status" value="1"/>
</dbReference>
<dbReference type="SMART" id="SM01234">
    <property type="entry name" value="Haemolytic"/>
    <property type="match status" value="1"/>
</dbReference>
<feature type="chain" id="PRO_0000171788" description="Putative membrane protein insertion efficiency factor">
    <location>
        <begin position="1"/>
        <end position="68"/>
    </location>
</feature>
<comment type="function">
    <text evidence="1">Could be involved in insertion of integral membrane proteins into the membrane.</text>
</comment>
<comment type="subcellular location">
    <subcellularLocation>
        <location evidence="1">Cell inner membrane</location>
        <topology evidence="1">Peripheral membrane protein</topology>
        <orientation evidence="1">Cytoplasmic side</orientation>
    </subcellularLocation>
</comment>
<comment type="similarity">
    <text evidence="1">Belongs to the UPF0161 family.</text>
</comment>